<gene>
    <name type="primary">hycD</name>
    <name type="synonym">hevD</name>
    <name type="ordered locus">b2722</name>
    <name type="ordered locus">JW2692</name>
</gene>
<evidence type="ECO:0000255" key="1"/>
<evidence type="ECO:0000305" key="2"/>
<evidence type="ECO:0007829" key="3">
    <source>
        <dbReference type="PDB" id="7Z0S"/>
    </source>
</evidence>
<evidence type="ECO:0007829" key="4">
    <source>
        <dbReference type="PDB" id="7Z0T"/>
    </source>
</evidence>
<sequence>MSVLYPLIQALVLFAVAPLLSGITRVARARLHNRRGPGVLQEYRDIIKLLGRQSVGPDASGWVFRLTPYVMVGVMLTIATALPVVTVGSPLPQLGDLITLLYLFAIARFFFAISGLDTGSPFTAIGASREAMLGVLVEPMLLLGLWVAAQVAGSTNISNITDTVYHWPLSQSIPLVLALCACAFATFIEMGKLPFDLAEAEQELQEGPLSEYSGSGFGVMKWGISLKQLVVLQMFVGVFIPWGQMETFTAGGLLLALVIAIVKLVVGVLVIALFENSMARLRLDITPRITWAGFGFAFLAFVSLLAA</sequence>
<name>HYCD_ECOLI</name>
<feature type="chain" id="PRO_0000117534" description="Formate hydrogenlyase subunit 4">
    <location>
        <begin position="1"/>
        <end position="307"/>
    </location>
</feature>
<feature type="topological domain" description="Periplasmic" evidence="1">
    <location>
        <begin position="1"/>
        <end position="2"/>
    </location>
</feature>
<feature type="transmembrane region" description="Helical" evidence="1">
    <location>
        <begin position="3"/>
        <end position="23"/>
    </location>
</feature>
<feature type="topological domain" description="Cytoplasmic" evidence="1">
    <location>
        <begin position="24"/>
        <end position="67"/>
    </location>
</feature>
<feature type="transmembrane region" description="Helical" evidence="1">
    <location>
        <begin position="68"/>
        <end position="88"/>
    </location>
</feature>
<feature type="topological domain" description="Periplasmic" evidence="1">
    <location>
        <begin position="89"/>
        <end position="93"/>
    </location>
</feature>
<feature type="transmembrane region" description="Helical" evidence="1">
    <location>
        <begin position="94"/>
        <end position="114"/>
    </location>
</feature>
<feature type="topological domain" description="Cytoplasmic" evidence="1">
    <location>
        <begin position="115"/>
        <end position="131"/>
    </location>
</feature>
<feature type="transmembrane region" description="Helical" evidence="1">
    <location>
        <begin position="132"/>
        <end position="152"/>
    </location>
</feature>
<feature type="topological domain" description="Periplasmic" evidence="1">
    <location>
        <begin position="153"/>
        <end position="167"/>
    </location>
</feature>
<feature type="transmembrane region" description="Helical" evidence="1">
    <location>
        <begin position="168"/>
        <end position="188"/>
    </location>
</feature>
<feature type="topological domain" description="Cytoplasmic" evidence="1">
    <location>
        <begin position="189"/>
        <end position="221"/>
    </location>
</feature>
<feature type="transmembrane region" description="Helical" evidence="1">
    <location>
        <begin position="222"/>
        <end position="242"/>
    </location>
</feature>
<feature type="topological domain" description="Periplasmic" evidence="1">
    <location>
        <begin position="243"/>
        <end position="253"/>
    </location>
</feature>
<feature type="transmembrane region" description="Helical" evidence="1">
    <location>
        <begin position="254"/>
        <end position="274"/>
    </location>
</feature>
<feature type="topological domain" description="Cytoplasmic" evidence="1">
    <location>
        <begin position="275"/>
        <end position="284"/>
    </location>
</feature>
<feature type="transmembrane region" description="Helical" evidence="1">
    <location>
        <begin position="285"/>
        <end position="305"/>
    </location>
</feature>
<feature type="topological domain" description="Periplasmic" evidence="1">
    <location>
        <begin position="306"/>
        <end position="307"/>
    </location>
</feature>
<feature type="helix" evidence="3">
    <location>
        <begin position="5"/>
        <end position="31"/>
    </location>
</feature>
<feature type="helix" evidence="3">
    <location>
        <begin position="41"/>
        <end position="50"/>
    </location>
</feature>
<feature type="helix" evidence="3">
    <location>
        <begin position="62"/>
        <end position="79"/>
    </location>
</feature>
<feature type="strand" evidence="3">
    <location>
        <begin position="84"/>
        <end position="88"/>
    </location>
</feature>
<feature type="helix" evidence="3">
    <location>
        <begin position="92"/>
        <end position="94"/>
    </location>
</feature>
<feature type="helix" evidence="3">
    <location>
        <begin position="97"/>
        <end position="118"/>
    </location>
</feature>
<feature type="helix" evidence="3">
    <location>
        <begin position="121"/>
        <end position="150"/>
    </location>
</feature>
<feature type="turn" evidence="3">
    <location>
        <begin position="151"/>
        <end position="153"/>
    </location>
</feature>
<feature type="helix" evidence="3">
    <location>
        <begin position="157"/>
        <end position="165"/>
    </location>
</feature>
<feature type="strand" evidence="4">
    <location>
        <begin position="169"/>
        <end position="171"/>
    </location>
</feature>
<feature type="helix" evidence="3">
    <location>
        <begin position="172"/>
        <end position="189"/>
    </location>
</feature>
<feature type="turn" evidence="3">
    <location>
        <begin position="201"/>
        <end position="203"/>
    </location>
</feature>
<feature type="strand" evidence="3">
    <location>
        <begin position="204"/>
        <end position="206"/>
    </location>
</feature>
<feature type="helix" evidence="3">
    <location>
        <begin position="207"/>
        <end position="210"/>
    </location>
</feature>
<feature type="helix" evidence="3">
    <location>
        <begin position="214"/>
        <end position="238"/>
    </location>
</feature>
<feature type="strand" evidence="3">
    <location>
        <begin position="244"/>
        <end position="247"/>
    </location>
</feature>
<feature type="strand" evidence="4">
    <location>
        <begin position="250"/>
        <end position="252"/>
    </location>
</feature>
<feature type="helix" evidence="3">
    <location>
        <begin position="253"/>
        <end position="275"/>
    </location>
</feature>
<feature type="turn" evidence="3">
    <location>
        <begin position="283"/>
        <end position="285"/>
    </location>
</feature>
<feature type="helix" evidence="3">
    <location>
        <begin position="286"/>
        <end position="306"/>
    </location>
</feature>
<keyword id="KW-0002">3D-structure</keyword>
<keyword id="KW-0997">Cell inner membrane</keyword>
<keyword id="KW-1003">Cell membrane</keyword>
<keyword id="KW-0472">Membrane</keyword>
<keyword id="KW-0560">Oxidoreductase</keyword>
<keyword id="KW-1185">Reference proteome</keyword>
<keyword id="KW-0812">Transmembrane</keyword>
<keyword id="KW-1133">Transmembrane helix</keyword>
<dbReference type="EMBL" id="X17506">
    <property type="protein sequence ID" value="CAA35549.1"/>
    <property type="molecule type" value="Genomic_DNA"/>
</dbReference>
<dbReference type="EMBL" id="U29579">
    <property type="protein sequence ID" value="AAA69232.1"/>
    <property type="molecule type" value="Genomic_DNA"/>
</dbReference>
<dbReference type="EMBL" id="U00096">
    <property type="protein sequence ID" value="AAC75764.1"/>
    <property type="molecule type" value="Genomic_DNA"/>
</dbReference>
<dbReference type="EMBL" id="AP009048">
    <property type="protein sequence ID" value="BAE76799.1"/>
    <property type="molecule type" value="Genomic_DNA"/>
</dbReference>
<dbReference type="PIR" id="S08622">
    <property type="entry name" value="S08622"/>
</dbReference>
<dbReference type="RefSeq" id="NP_417202.1">
    <property type="nucleotide sequence ID" value="NC_000913.3"/>
</dbReference>
<dbReference type="RefSeq" id="WP_000115224.1">
    <property type="nucleotide sequence ID" value="NZ_LN832404.1"/>
</dbReference>
<dbReference type="PDB" id="7Z0S">
    <property type="method" value="EM"/>
    <property type="resolution" value="2.60 A"/>
    <property type="chains" value="D=1-307"/>
</dbReference>
<dbReference type="PDB" id="7Z0T">
    <property type="method" value="EM"/>
    <property type="resolution" value="3.40 A"/>
    <property type="chains" value="D=1-307"/>
</dbReference>
<dbReference type="PDBsum" id="7Z0S"/>
<dbReference type="PDBsum" id="7Z0T"/>
<dbReference type="EMDB" id="EMD-14429"/>
<dbReference type="EMDB" id="EMD-14430"/>
<dbReference type="SMR" id="P16430"/>
<dbReference type="BioGRID" id="4261429">
    <property type="interactions" value="6"/>
</dbReference>
<dbReference type="ComplexPortal" id="CPX-317">
    <property type="entry name" value="Formate hydrogenlyase-H/Hydrogenase-3 complex"/>
</dbReference>
<dbReference type="FunCoup" id="P16430">
    <property type="interactions" value="151"/>
</dbReference>
<dbReference type="IntAct" id="P16430">
    <property type="interactions" value="1"/>
</dbReference>
<dbReference type="STRING" id="511145.b2722"/>
<dbReference type="TCDB" id="3.D.1.9.2">
    <property type="family name" value="the h+ or na+-translocating nadh dehydrogenase (ndh) family"/>
</dbReference>
<dbReference type="jPOST" id="P16430"/>
<dbReference type="PaxDb" id="511145-b2722"/>
<dbReference type="EnsemblBacteria" id="AAC75764">
    <property type="protein sequence ID" value="AAC75764"/>
    <property type="gene ID" value="b2722"/>
</dbReference>
<dbReference type="GeneID" id="89517533"/>
<dbReference type="GeneID" id="948994"/>
<dbReference type="KEGG" id="ecj:JW2692"/>
<dbReference type="KEGG" id="eco:b2722"/>
<dbReference type="KEGG" id="ecoc:C3026_14975"/>
<dbReference type="PATRIC" id="fig|1411691.4.peg.4019"/>
<dbReference type="EchoBASE" id="EB0472"/>
<dbReference type="eggNOG" id="COG0650">
    <property type="taxonomic scope" value="Bacteria"/>
</dbReference>
<dbReference type="HOGENOM" id="CLU_015134_2_1_6"/>
<dbReference type="InParanoid" id="P16430"/>
<dbReference type="OMA" id="PWGQMTS"/>
<dbReference type="OrthoDB" id="9778499at2"/>
<dbReference type="PhylomeDB" id="P16430"/>
<dbReference type="BioCyc" id="EcoCyc:HYCD-MONOMER"/>
<dbReference type="BioCyc" id="MetaCyc:HYCD-MONOMER"/>
<dbReference type="PRO" id="PR:P16430"/>
<dbReference type="Proteomes" id="UP000000625">
    <property type="component" value="Chromosome"/>
</dbReference>
<dbReference type="GO" id="GO:0009326">
    <property type="term" value="C:formate dehydrogenase complex"/>
    <property type="evidence" value="ECO:0000353"/>
    <property type="project" value="ComplexPortal"/>
</dbReference>
<dbReference type="GO" id="GO:0005886">
    <property type="term" value="C:plasma membrane"/>
    <property type="evidence" value="ECO:0000314"/>
    <property type="project" value="EcoCyc"/>
</dbReference>
<dbReference type="GO" id="GO:0016491">
    <property type="term" value="F:oxidoreductase activity"/>
    <property type="evidence" value="ECO:0007669"/>
    <property type="project" value="UniProtKB-KW"/>
</dbReference>
<dbReference type="GO" id="GO:0019645">
    <property type="term" value="P:anaerobic electron transport chain"/>
    <property type="evidence" value="ECO:0000314"/>
    <property type="project" value="ComplexPortal"/>
</dbReference>
<dbReference type="GO" id="GO:0009061">
    <property type="term" value="P:anaerobic respiration"/>
    <property type="evidence" value="ECO:0000314"/>
    <property type="project" value="ComplexPortal"/>
</dbReference>
<dbReference type="GO" id="GO:0015944">
    <property type="term" value="P:formate oxidation"/>
    <property type="evidence" value="ECO:0000314"/>
    <property type="project" value="ComplexPortal"/>
</dbReference>
<dbReference type="GO" id="GO:0006007">
    <property type="term" value="P:glucose catabolic process"/>
    <property type="evidence" value="ECO:0000314"/>
    <property type="project" value="ComplexPortal"/>
</dbReference>
<dbReference type="InterPro" id="IPR052561">
    <property type="entry name" value="ComplexI_Subunit1"/>
</dbReference>
<dbReference type="InterPro" id="IPR001694">
    <property type="entry name" value="NADH_UbQ_OxRdtase_su1/FPO"/>
</dbReference>
<dbReference type="InterPro" id="IPR018086">
    <property type="entry name" value="NADH_UbQ_OxRdtase_su1_CS"/>
</dbReference>
<dbReference type="PANTHER" id="PTHR43359">
    <property type="entry name" value="FORMATE HYDROGENLYASE SUBUNIT 4"/>
    <property type="match status" value="1"/>
</dbReference>
<dbReference type="PANTHER" id="PTHR43359:SF1">
    <property type="entry name" value="FORMATE HYDROGENLYASE SUBUNIT 4-RELATED"/>
    <property type="match status" value="1"/>
</dbReference>
<dbReference type="Pfam" id="PF00146">
    <property type="entry name" value="NADHdh"/>
    <property type="match status" value="1"/>
</dbReference>
<dbReference type="PROSITE" id="PS00667">
    <property type="entry name" value="COMPLEX1_ND1_1"/>
    <property type="match status" value="1"/>
</dbReference>
<dbReference type="PROSITE" id="PS00668">
    <property type="entry name" value="COMPLEX1_ND1_2"/>
    <property type="match status" value="1"/>
</dbReference>
<accession>P16430</accession>
<accession>Q2MAA7</accession>
<organism>
    <name type="scientific">Escherichia coli (strain K12)</name>
    <dbReference type="NCBI Taxonomy" id="83333"/>
    <lineage>
        <taxon>Bacteria</taxon>
        <taxon>Pseudomonadati</taxon>
        <taxon>Pseudomonadota</taxon>
        <taxon>Gammaproteobacteria</taxon>
        <taxon>Enterobacterales</taxon>
        <taxon>Enterobacteriaceae</taxon>
        <taxon>Escherichia</taxon>
    </lineage>
</organism>
<reference key="1">
    <citation type="journal article" date="1990" name="Mol. Microbiol.">
        <title>Nucleotide sequence and expression of an operon in Escherichia coli coding for formate hydrogenlyase components.</title>
        <authorList>
            <person name="Boehm R."/>
            <person name="Sauter M."/>
            <person name="Boeck A."/>
        </authorList>
    </citation>
    <scope>NUCLEOTIDE SEQUENCE [GENOMIC DNA]</scope>
    <source>
        <strain>K12 / MC4100 / ATCC 35695 / DSM 6574</strain>
    </source>
</reference>
<reference key="2">
    <citation type="journal article" date="1997" name="Science">
        <title>The complete genome sequence of Escherichia coli K-12.</title>
        <authorList>
            <person name="Blattner F.R."/>
            <person name="Plunkett G. III"/>
            <person name="Bloch C.A."/>
            <person name="Perna N.T."/>
            <person name="Burland V."/>
            <person name="Riley M."/>
            <person name="Collado-Vides J."/>
            <person name="Glasner J.D."/>
            <person name="Rode C.K."/>
            <person name="Mayhew G.F."/>
            <person name="Gregor J."/>
            <person name="Davis N.W."/>
            <person name="Kirkpatrick H.A."/>
            <person name="Goeden M.A."/>
            <person name="Rose D.J."/>
            <person name="Mau B."/>
            <person name="Shao Y."/>
        </authorList>
    </citation>
    <scope>NUCLEOTIDE SEQUENCE [LARGE SCALE GENOMIC DNA]</scope>
    <source>
        <strain>K12 / MG1655 / ATCC 47076</strain>
    </source>
</reference>
<reference key="3">
    <citation type="journal article" date="2006" name="Mol. Syst. Biol.">
        <title>Highly accurate genome sequences of Escherichia coli K-12 strains MG1655 and W3110.</title>
        <authorList>
            <person name="Hayashi K."/>
            <person name="Morooka N."/>
            <person name="Yamamoto Y."/>
            <person name="Fujita K."/>
            <person name="Isono K."/>
            <person name="Choi S."/>
            <person name="Ohtsubo E."/>
            <person name="Baba T."/>
            <person name="Wanner B.L."/>
            <person name="Mori H."/>
            <person name="Horiuchi T."/>
        </authorList>
    </citation>
    <scope>NUCLEOTIDE SEQUENCE [LARGE SCALE GENOMIC DNA]</scope>
    <source>
        <strain>K12 / W3110 / ATCC 27325 / DSM 5911</strain>
    </source>
</reference>
<reference key="4">
    <citation type="journal article" date="2005" name="Science">
        <title>Global topology analysis of the Escherichia coli inner membrane proteome.</title>
        <authorList>
            <person name="Daley D.O."/>
            <person name="Rapp M."/>
            <person name="Granseth E."/>
            <person name="Melen K."/>
            <person name="Drew D."/>
            <person name="von Heijne G."/>
        </authorList>
    </citation>
    <scope>TOPOLOGY [LARGE SCALE ANALYSIS]</scope>
    <source>
        <strain>K12 / MG1655 / ATCC 47076</strain>
    </source>
</reference>
<comment type="subunit">
    <text>FHL comprises of a formate dehydrogenase, unidentified electron carriers and a hydrogenase (isoenzyme 3). In this non-energy conserving pathway molecular hydrogen and carbodioxide from formate are released.</text>
</comment>
<comment type="subcellular location">
    <subcellularLocation>
        <location>Cell inner membrane</location>
        <topology>Multi-pass membrane protein</topology>
    </subcellularLocation>
</comment>
<comment type="similarity">
    <text evidence="2">Belongs to the complex I subunit 1 family.</text>
</comment>
<proteinExistence type="evidence at protein level"/>
<protein>
    <recommendedName>
        <fullName>Formate hydrogenlyase subunit 4</fullName>
        <shortName>FHL subunit 4</shortName>
    </recommendedName>
    <alternativeName>
        <fullName>Hydrogenase 3 component D</fullName>
    </alternativeName>
</protein>